<accession>B0JY77</accession>
<keyword id="KW-0067">ATP-binding</keyword>
<keyword id="KW-0963">Cytoplasm</keyword>
<keyword id="KW-0227">DNA damage</keyword>
<keyword id="KW-0233">DNA recombination</keyword>
<keyword id="KW-0234">DNA repair</keyword>
<keyword id="KW-0238">DNA-binding</keyword>
<keyword id="KW-0378">Hydrolase</keyword>
<keyword id="KW-0547">Nucleotide-binding</keyword>
<dbReference type="EC" id="3.6.4.-" evidence="1"/>
<dbReference type="EMBL" id="AP009552">
    <property type="protein sequence ID" value="BAG05115.1"/>
    <property type="molecule type" value="Genomic_DNA"/>
</dbReference>
<dbReference type="RefSeq" id="WP_012267655.1">
    <property type="nucleotide sequence ID" value="NC_010296.1"/>
</dbReference>
<dbReference type="SMR" id="B0JY77"/>
<dbReference type="STRING" id="449447.MAE_52930"/>
<dbReference type="PaxDb" id="449447-MAE_52930"/>
<dbReference type="EnsemblBacteria" id="BAG05115">
    <property type="protein sequence ID" value="BAG05115"/>
    <property type="gene ID" value="MAE_52930"/>
</dbReference>
<dbReference type="KEGG" id="mar:MAE_52930"/>
<dbReference type="PATRIC" id="fig|449447.4.peg.4824"/>
<dbReference type="eggNOG" id="COG2255">
    <property type="taxonomic scope" value="Bacteria"/>
</dbReference>
<dbReference type="HOGENOM" id="CLU_055599_1_0_3"/>
<dbReference type="BioCyc" id="MAER449447:MAE_RS23035-MONOMER"/>
<dbReference type="Proteomes" id="UP000001510">
    <property type="component" value="Chromosome"/>
</dbReference>
<dbReference type="GO" id="GO:0005737">
    <property type="term" value="C:cytoplasm"/>
    <property type="evidence" value="ECO:0007669"/>
    <property type="project" value="UniProtKB-SubCell"/>
</dbReference>
<dbReference type="GO" id="GO:0048476">
    <property type="term" value="C:Holliday junction resolvase complex"/>
    <property type="evidence" value="ECO:0007669"/>
    <property type="project" value="UniProtKB-UniRule"/>
</dbReference>
<dbReference type="GO" id="GO:0005524">
    <property type="term" value="F:ATP binding"/>
    <property type="evidence" value="ECO:0007669"/>
    <property type="project" value="UniProtKB-UniRule"/>
</dbReference>
<dbReference type="GO" id="GO:0016887">
    <property type="term" value="F:ATP hydrolysis activity"/>
    <property type="evidence" value="ECO:0007669"/>
    <property type="project" value="InterPro"/>
</dbReference>
<dbReference type="GO" id="GO:0000400">
    <property type="term" value="F:four-way junction DNA binding"/>
    <property type="evidence" value="ECO:0007669"/>
    <property type="project" value="UniProtKB-UniRule"/>
</dbReference>
<dbReference type="GO" id="GO:0009378">
    <property type="term" value="F:four-way junction helicase activity"/>
    <property type="evidence" value="ECO:0007669"/>
    <property type="project" value="InterPro"/>
</dbReference>
<dbReference type="GO" id="GO:0006310">
    <property type="term" value="P:DNA recombination"/>
    <property type="evidence" value="ECO:0007669"/>
    <property type="project" value="UniProtKB-UniRule"/>
</dbReference>
<dbReference type="GO" id="GO:0006281">
    <property type="term" value="P:DNA repair"/>
    <property type="evidence" value="ECO:0007669"/>
    <property type="project" value="UniProtKB-UniRule"/>
</dbReference>
<dbReference type="CDD" id="cd00009">
    <property type="entry name" value="AAA"/>
    <property type="match status" value="1"/>
</dbReference>
<dbReference type="Gene3D" id="1.10.8.60">
    <property type="match status" value="1"/>
</dbReference>
<dbReference type="Gene3D" id="3.40.50.300">
    <property type="entry name" value="P-loop containing nucleotide triphosphate hydrolases"/>
    <property type="match status" value="1"/>
</dbReference>
<dbReference type="Gene3D" id="1.10.10.10">
    <property type="entry name" value="Winged helix-like DNA-binding domain superfamily/Winged helix DNA-binding domain"/>
    <property type="match status" value="1"/>
</dbReference>
<dbReference type="HAMAP" id="MF_00016">
    <property type="entry name" value="DNA_HJ_migration_RuvB"/>
    <property type="match status" value="1"/>
</dbReference>
<dbReference type="InterPro" id="IPR003593">
    <property type="entry name" value="AAA+_ATPase"/>
</dbReference>
<dbReference type="InterPro" id="IPR041445">
    <property type="entry name" value="AAA_lid_4"/>
</dbReference>
<dbReference type="InterPro" id="IPR004605">
    <property type="entry name" value="DNA_helicase_Holl-junc_RuvB"/>
</dbReference>
<dbReference type="InterPro" id="IPR027417">
    <property type="entry name" value="P-loop_NTPase"/>
</dbReference>
<dbReference type="InterPro" id="IPR008824">
    <property type="entry name" value="RuvB-like_N"/>
</dbReference>
<dbReference type="InterPro" id="IPR008823">
    <property type="entry name" value="RuvB_C"/>
</dbReference>
<dbReference type="InterPro" id="IPR036388">
    <property type="entry name" value="WH-like_DNA-bd_sf"/>
</dbReference>
<dbReference type="InterPro" id="IPR036390">
    <property type="entry name" value="WH_DNA-bd_sf"/>
</dbReference>
<dbReference type="NCBIfam" id="NF000868">
    <property type="entry name" value="PRK00080.1"/>
    <property type="match status" value="1"/>
</dbReference>
<dbReference type="NCBIfam" id="TIGR00635">
    <property type="entry name" value="ruvB"/>
    <property type="match status" value="1"/>
</dbReference>
<dbReference type="PANTHER" id="PTHR42848">
    <property type="match status" value="1"/>
</dbReference>
<dbReference type="PANTHER" id="PTHR42848:SF1">
    <property type="entry name" value="HOLLIDAY JUNCTION BRANCH MIGRATION COMPLEX SUBUNIT RUVB"/>
    <property type="match status" value="1"/>
</dbReference>
<dbReference type="Pfam" id="PF17864">
    <property type="entry name" value="AAA_lid_4"/>
    <property type="match status" value="1"/>
</dbReference>
<dbReference type="Pfam" id="PF05491">
    <property type="entry name" value="RuvB_C"/>
    <property type="match status" value="1"/>
</dbReference>
<dbReference type="Pfam" id="PF05496">
    <property type="entry name" value="RuvB_N"/>
    <property type="match status" value="1"/>
</dbReference>
<dbReference type="SMART" id="SM00382">
    <property type="entry name" value="AAA"/>
    <property type="match status" value="1"/>
</dbReference>
<dbReference type="SUPFAM" id="SSF52540">
    <property type="entry name" value="P-loop containing nucleoside triphosphate hydrolases"/>
    <property type="match status" value="1"/>
</dbReference>
<dbReference type="SUPFAM" id="SSF46785">
    <property type="entry name" value="Winged helix' DNA-binding domain"/>
    <property type="match status" value="1"/>
</dbReference>
<evidence type="ECO:0000255" key="1">
    <source>
        <dbReference type="HAMAP-Rule" id="MF_00016"/>
    </source>
</evidence>
<evidence type="ECO:0000256" key="2">
    <source>
        <dbReference type="SAM" id="MobiDB-lite"/>
    </source>
</evidence>
<reference key="1">
    <citation type="journal article" date="2007" name="DNA Res.">
        <title>Complete genomic structure of the bloom-forming toxic cyanobacterium Microcystis aeruginosa NIES-843.</title>
        <authorList>
            <person name="Kaneko T."/>
            <person name="Nakajima N."/>
            <person name="Okamoto S."/>
            <person name="Suzuki I."/>
            <person name="Tanabe Y."/>
            <person name="Tamaoki M."/>
            <person name="Nakamura Y."/>
            <person name="Kasai F."/>
            <person name="Watanabe A."/>
            <person name="Kawashima K."/>
            <person name="Kishida Y."/>
            <person name="Ono A."/>
            <person name="Shimizu Y."/>
            <person name="Takahashi C."/>
            <person name="Minami C."/>
            <person name="Fujishiro T."/>
            <person name="Kohara M."/>
            <person name="Katoh M."/>
            <person name="Nakazaki N."/>
            <person name="Nakayama S."/>
            <person name="Yamada M."/>
            <person name="Tabata S."/>
            <person name="Watanabe M.M."/>
        </authorList>
    </citation>
    <scope>NUCLEOTIDE SEQUENCE [LARGE SCALE GENOMIC DNA]</scope>
    <source>
        <strain>NIES-843 / IAM M-247</strain>
    </source>
</reference>
<organism>
    <name type="scientific">Microcystis aeruginosa (strain NIES-843 / IAM M-2473)</name>
    <dbReference type="NCBI Taxonomy" id="449447"/>
    <lineage>
        <taxon>Bacteria</taxon>
        <taxon>Bacillati</taxon>
        <taxon>Cyanobacteriota</taxon>
        <taxon>Cyanophyceae</taxon>
        <taxon>Oscillatoriophycideae</taxon>
        <taxon>Chroococcales</taxon>
        <taxon>Microcystaceae</taxon>
        <taxon>Microcystis</taxon>
    </lineage>
</organism>
<proteinExistence type="inferred from homology"/>
<gene>
    <name evidence="1" type="primary">ruvB</name>
    <name type="ordered locus">MAE_52930</name>
</gene>
<protein>
    <recommendedName>
        <fullName evidence="1">Holliday junction branch migration complex subunit RuvB</fullName>
        <ecNumber evidence="1">3.6.4.-</ecNumber>
    </recommendedName>
</protein>
<name>RUVB_MICAN</name>
<sequence>MAIKRSHNSPPATEENLLTPNPTIEETEKAAAEIRPQSLEDYIGQQDLKANLKVTIAAAKARQEAIDHLLFYGPPGLGKTTMALILAAEMGVNCRITAAPALERPRDITGILINLQPRDILFIDEIHRLNRVTEELLYPAMEDYRLDVTIGKGQAAKIRSISLPPFTLIGATTKVGSLTSPLRDRFGLIQRLRFYAVEELTAIILRSATIFNIPITEAGAIEIARRSRGTPRIANRLLKRVRDYVQVKGETIISPQLAAEGLNQLNVDSMGLDWTDRLVLKTMIQQFQGKPVGLEAVAAATGEDAKTIEEVYEPYLLQIGYLNRTPRGRVVTSAAYEHLGLLAKLPKNKDRSLPLFEF</sequence>
<comment type="function">
    <text evidence="1">The RuvA-RuvB-RuvC complex processes Holliday junction (HJ) DNA during genetic recombination and DNA repair, while the RuvA-RuvB complex plays an important role in the rescue of blocked DNA replication forks via replication fork reversal (RFR). RuvA specifically binds to HJ cruciform DNA, conferring on it an open structure. The RuvB hexamer acts as an ATP-dependent pump, pulling dsDNA into and through the RuvAB complex. RuvB forms 2 homohexamers on either side of HJ DNA bound by 1 or 2 RuvA tetramers; 4 subunits per hexamer contact DNA at a time. Coordinated motions by a converter formed by DNA-disengaged RuvB subunits stimulates ATP hydrolysis and nucleotide exchange. Immobilization of the converter enables RuvB to convert the ATP-contained energy into a lever motion, pulling 2 nucleotides of DNA out of the RuvA tetramer per ATP hydrolyzed, thus driving DNA branch migration. The RuvB motors rotate together with the DNA substrate, which together with the progressing nucleotide cycle form the mechanistic basis for DNA recombination by continuous HJ branch migration. Branch migration allows RuvC to scan DNA until it finds its consensus sequence, where it cleaves and resolves cruciform DNA.</text>
</comment>
<comment type="catalytic activity">
    <reaction evidence="1">
        <text>ATP + H2O = ADP + phosphate + H(+)</text>
        <dbReference type="Rhea" id="RHEA:13065"/>
        <dbReference type="ChEBI" id="CHEBI:15377"/>
        <dbReference type="ChEBI" id="CHEBI:15378"/>
        <dbReference type="ChEBI" id="CHEBI:30616"/>
        <dbReference type="ChEBI" id="CHEBI:43474"/>
        <dbReference type="ChEBI" id="CHEBI:456216"/>
    </reaction>
</comment>
<comment type="subunit">
    <text evidence="1">Homohexamer. Forms an RuvA(8)-RuvB(12)-Holliday junction (HJ) complex. HJ DNA is sandwiched between 2 RuvA tetramers; dsDNA enters through RuvA and exits via RuvB. An RuvB hexamer assembles on each DNA strand where it exits the tetramer. Each RuvB hexamer is contacted by two RuvA subunits (via domain III) on 2 adjacent RuvB subunits; this complex drives branch migration. In the full resolvosome a probable DNA-RuvA(4)-RuvB(12)-RuvC(2) complex forms which resolves the HJ.</text>
</comment>
<comment type="subcellular location">
    <subcellularLocation>
        <location evidence="1">Cytoplasm</location>
    </subcellularLocation>
</comment>
<comment type="domain">
    <text evidence="1">Has 3 domains, the large (RuvB-L) and small ATPase (RuvB-S) domains and the C-terminal head (RuvB-H) domain. The head domain binds DNA, while the ATPase domains jointly bind ATP, ADP or are empty depending on the state of the subunit in the translocation cycle. During a single DNA translocation step the structure of each domain remains the same, but their relative positions change.</text>
</comment>
<comment type="similarity">
    <text evidence="1">Belongs to the RuvB family.</text>
</comment>
<feature type="chain" id="PRO_1000074089" description="Holliday junction branch migration complex subunit RuvB">
    <location>
        <begin position="1"/>
        <end position="358"/>
    </location>
</feature>
<feature type="region of interest" description="Disordered" evidence="2">
    <location>
        <begin position="1"/>
        <end position="24"/>
    </location>
</feature>
<feature type="region of interest" description="Large ATPase domain (RuvB-L)" evidence="1">
    <location>
        <begin position="13"/>
        <end position="195"/>
    </location>
</feature>
<feature type="region of interest" description="Small ATPAse domain (RuvB-S)" evidence="1">
    <location>
        <begin position="196"/>
        <end position="266"/>
    </location>
</feature>
<feature type="region of interest" description="Head domain (RuvB-H)" evidence="1">
    <location>
        <begin position="269"/>
        <end position="358"/>
    </location>
</feature>
<feature type="compositionally biased region" description="Polar residues" evidence="2">
    <location>
        <begin position="8"/>
        <end position="22"/>
    </location>
</feature>
<feature type="binding site" evidence="1">
    <location>
        <position position="34"/>
    </location>
    <ligand>
        <name>ATP</name>
        <dbReference type="ChEBI" id="CHEBI:30616"/>
    </ligand>
</feature>
<feature type="binding site" evidence="1">
    <location>
        <position position="35"/>
    </location>
    <ligand>
        <name>ATP</name>
        <dbReference type="ChEBI" id="CHEBI:30616"/>
    </ligand>
</feature>
<feature type="binding site" evidence="1">
    <location>
        <position position="76"/>
    </location>
    <ligand>
        <name>ATP</name>
        <dbReference type="ChEBI" id="CHEBI:30616"/>
    </ligand>
</feature>
<feature type="binding site" evidence="1">
    <location>
        <position position="79"/>
    </location>
    <ligand>
        <name>ATP</name>
        <dbReference type="ChEBI" id="CHEBI:30616"/>
    </ligand>
</feature>
<feature type="binding site" evidence="1">
    <location>
        <position position="80"/>
    </location>
    <ligand>
        <name>ATP</name>
        <dbReference type="ChEBI" id="CHEBI:30616"/>
    </ligand>
</feature>
<feature type="binding site" evidence="1">
    <location>
        <position position="80"/>
    </location>
    <ligand>
        <name>Mg(2+)</name>
        <dbReference type="ChEBI" id="CHEBI:18420"/>
    </ligand>
</feature>
<feature type="binding site" evidence="1">
    <location>
        <position position="81"/>
    </location>
    <ligand>
        <name>ATP</name>
        <dbReference type="ChEBI" id="CHEBI:30616"/>
    </ligand>
</feature>
<feature type="binding site" evidence="1">
    <location>
        <begin position="142"/>
        <end position="144"/>
    </location>
    <ligand>
        <name>ATP</name>
        <dbReference type="ChEBI" id="CHEBI:30616"/>
    </ligand>
</feature>
<feature type="binding site" evidence="1">
    <location>
        <position position="185"/>
    </location>
    <ligand>
        <name>ATP</name>
        <dbReference type="ChEBI" id="CHEBI:30616"/>
    </ligand>
</feature>
<feature type="binding site" evidence="1">
    <location>
        <position position="195"/>
    </location>
    <ligand>
        <name>ATP</name>
        <dbReference type="ChEBI" id="CHEBI:30616"/>
    </ligand>
</feature>
<feature type="binding site" evidence="1">
    <location>
        <position position="232"/>
    </location>
    <ligand>
        <name>ATP</name>
        <dbReference type="ChEBI" id="CHEBI:30616"/>
    </ligand>
</feature>
<feature type="binding site" evidence="1">
    <location>
        <position position="324"/>
    </location>
    <ligand>
        <name>DNA</name>
        <dbReference type="ChEBI" id="CHEBI:16991"/>
    </ligand>
</feature>
<feature type="binding site" evidence="1">
    <location>
        <position position="329"/>
    </location>
    <ligand>
        <name>DNA</name>
        <dbReference type="ChEBI" id="CHEBI:16991"/>
    </ligand>
</feature>